<proteinExistence type="inferred from homology"/>
<keyword id="KW-0496">Mitochondrion</keyword>
<keyword id="KW-0809">Transit peptide</keyword>
<reference key="1">
    <citation type="journal article" date="2008" name="FEMS Yeast Res.">
        <title>Comparative genome analysis of a Saccharomyces cerevisiae wine strain.</title>
        <authorList>
            <person name="Borneman A.R."/>
            <person name="Forgan A.H."/>
            <person name="Pretorius I.S."/>
            <person name="Chambers P.J."/>
        </authorList>
    </citation>
    <scope>NUCLEOTIDE SEQUENCE [LARGE SCALE GENOMIC DNA]</scope>
    <source>
        <strain>AWRI1631</strain>
    </source>
</reference>
<evidence type="ECO:0000250" key="1"/>
<evidence type="ECO:0000255" key="2"/>
<evidence type="ECO:0000255" key="3">
    <source>
        <dbReference type="PROSITE-ProRule" id="PRU01058"/>
    </source>
</evidence>
<dbReference type="EMBL" id="ABSV01002197">
    <property type="protein sequence ID" value="EDZ69206.1"/>
    <property type="molecule type" value="Genomic_DNA"/>
</dbReference>
<dbReference type="SMR" id="B5VS87"/>
<dbReference type="OrthoDB" id="33022at4893"/>
<dbReference type="Proteomes" id="UP000008988">
    <property type="component" value="Unassembled WGS sequence"/>
</dbReference>
<dbReference type="GO" id="GO:0005739">
    <property type="term" value="C:mitochondrion"/>
    <property type="evidence" value="ECO:0007669"/>
    <property type="project" value="UniProtKB-SubCell"/>
</dbReference>
<dbReference type="GO" id="GO:0005525">
    <property type="term" value="F:GTP binding"/>
    <property type="evidence" value="ECO:0007669"/>
    <property type="project" value="InterPro"/>
</dbReference>
<dbReference type="CDD" id="cd01855">
    <property type="entry name" value="YqeH"/>
    <property type="match status" value="1"/>
</dbReference>
<dbReference type="Gene3D" id="3.40.50.300">
    <property type="entry name" value="P-loop containing nucleotide triphosphate hydrolases"/>
    <property type="match status" value="1"/>
</dbReference>
<dbReference type="InterPro" id="IPR030378">
    <property type="entry name" value="G_CP_dom"/>
</dbReference>
<dbReference type="InterPro" id="IPR006073">
    <property type="entry name" value="GTP-bd"/>
</dbReference>
<dbReference type="InterPro" id="IPR050896">
    <property type="entry name" value="Mito_lipid_metab_GTPase"/>
</dbReference>
<dbReference type="InterPro" id="IPR027417">
    <property type="entry name" value="P-loop_NTPase"/>
</dbReference>
<dbReference type="PANTHER" id="PTHR46434">
    <property type="entry name" value="GENETIC INTERACTOR OF PROHIBITINS 3, MITOCHONDRIAL"/>
    <property type="match status" value="1"/>
</dbReference>
<dbReference type="PANTHER" id="PTHR46434:SF1">
    <property type="entry name" value="GENETIC INTERACTOR OF PROHIBITINS 3, MITOCHONDRIAL"/>
    <property type="match status" value="1"/>
</dbReference>
<dbReference type="Pfam" id="PF01926">
    <property type="entry name" value="MMR_HSR1"/>
    <property type="match status" value="1"/>
</dbReference>
<dbReference type="SUPFAM" id="SSF52540">
    <property type="entry name" value="P-loop containing nucleoside triphosphate hydrolases"/>
    <property type="match status" value="1"/>
</dbReference>
<dbReference type="PROSITE" id="PS51721">
    <property type="entry name" value="G_CP"/>
    <property type="match status" value="1"/>
</dbReference>
<name>GEP3_YEAS6</name>
<organism>
    <name type="scientific">Saccharomyces cerevisiae (strain AWRI1631)</name>
    <name type="common">Baker's yeast</name>
    <dbReference type="NCBI Taxonomy" id="545124"/>
    <lineage>
        <taxon>Eukaryota</taxon>
        <taxon>Fungi</taxon>
        <taxon>Dikarya</taxon>
        <taxon>Ascomycota</taxon>
        <taxon>Saccharomycotina</taxon>
        <taxon>Saccharomycetes</taxon>
        <taxon>Saccharomycetales</taxon>
        <taxon>Saccharomycetaceae</taxon>
        <taxon>Saccharomyces</taxon>
    </lineage>
</organism>
<feature type="transit peptide" description="Mitochondrion" evidence="2">
    <location>
        <begin position="1"/>
        <end position="21"/>
    </location>
</feature>
<feature type="chain" id="PRO_0000409644" description="Genetic interactor of prohibitins 3, mitochondrial">
    <location>
        <begin position="22"/>
        <end position="556"/>
    </location>
</feature>
<feature type="domain" description="CP-type G" evidence="3">
    <location>
        <begin position="113"/>
        <end position="305"/>
    </location>
</feature>
<protein>
    <recommendedName>
        <fullName>Genetic interactor of prohibitins 3, mitochondrial</fullName>
    </recommendedName>
    <alternativeName>
        <fullName>Altered inheritance of mitochondria protein 40</fullName>
    </alternativeName>
    <alternativeName>
        <fullName>Found in mitochondrial proteome protein 38</fullName>
    </alternativeName>
</protein>
<accession>B5VS87</accession>
<comment type="function">
    <text evidence="1">Interacts genetically with prohibitins and thus may be involved in the mitochondrial lipid metabolism.</text>
</comment>
<comment type="subcellular location">
    <subcellularLocation>
        <location evidence="1">Mitochondrion</location>
    </subcellularLocation>
</comment>
<comment type="similarity">
    <text evidence="3">Belongs to the TRAFAC class YlqF/YawG GTPase family. GEP3 subfamily.</text>
</comment>
<sequence length="556" mass="63807">MLNLCHALRGVRQFSCSVIVKVKCASCSIKLQDQDPSKPGYYTKPKSLPDSKLNPDLQDLKYLLFSQDIQLSKQAIQNDPDLKTKRDLLLRVICKRCSNALHHNNYNPEEFPESTLNDILNYVPRGSNVMHIVPFVEFPLHLDPNVLKRNDLDTTLVLTKSDQVFKDKNAVSKKVPIFMKQFLKNTLRIDSNKTFAISALKNWNISMFYNYFKNYTYLLGNPNVGKSTLINTLLQKYLGYKVKIDSTGKINSPSEEVMQEAFTNPKNFFKIQAAGVSHIPNLTRSGQAYQVGGKILFDLPGYSTSTSRLRLEEPIDERWLQRLRKTDLFNRKHIKQKTYESMKGTSQGGCYTVGGIFYLVPPKGSINQIVKYIPGPSKTFKNIEKGIDVFNSCNSSSGTHPLSRYCGIKSVICEKSQYKRYAIPPFIGSIEIVLKDIGYILLRTTGRYEFKGLHEIWIPRGIQVGIREPLENLIESGYQRYIETNGKESSCPRDRPIISSLYEMAPDEADTLNAVKKSYLEKTEKDLSARRFVDDDPYDLVQHLEKKKNPYWYYQW</sequence>
<gene>
    <name type="primary">GEP3</name>
    <name type="synonym">AIM40</name>
    <name type="synonym">FMP48</name>
    <name type="ORF">AWRI1631_153550</name>
</gene>